<evidence type="ECO:0000250" key="1"/>
<evidence type="ECO:0000250" key="2">
    <source>
        <dbReference type="UniProtKB" id="P00157"/>
    </source>
</evidence>
<evidence type="ECO:0000255" key="3">
    <source>
        <dbReference type="PROSITE-ProRule" id="PRU00967"/>
    </source>
</evidence>
<evidence type="ECO:0000255" key="4">
    <source>
        <dbReference type="PROSITE-ProRule" id="PRU00968"/>
    </source>
</evidence>
<gene>
    <name type="primary">MT-CYB</name>
    <name type="synonym">COB</name>
    <name type="synonym">CYTB</name>
    <name type="synonym">MTCYB</name>
</gene>
<sequence>MTNLRKTHPLMKIVNSSFIDLPAPSNISSWWNFGSLLGVCLIIQILTGLFLAMHYTSDTMTAFSSVTHICRDVNYGWLIRYLHANGASMFFICLFLHVGRGLYYGSYMYLETWNIGVLLLFTVMATAFMGYVLPWGQMSFWGATVITNLLSAIPYIGSDLVEWIWSGFSVDKATLTRFFAFHFILPFIIAALAGVHLLFLHETGSNNPSGLSSDADKILFHPYYTIKDILGVFLLILTLTSLVLFSPDLLGDPDNYTHANPLNTPPHIKPEWYFLFAYAILRSIPNKLGGVLALVLSILILALVPFLHTSKQRSMMFRPFSQCLFWILVADLLTLTWIGGQPVEHPFIIIGQLASILYFLLILVIMPITSLLENNLMKW</sequence>
<protein>
    <recommendedName>
        <fullName>Cytochrome b</fullName>
    </recommendedName>
    <alternativeName>
        <fullName>Complex III subunit 3</fullName>
    </alternativeName>
    <alternativeName>
        <fullName>Complex III subunit III</fullName>
    </alternativeName>
    <alternativeName>
        <fullName>Cytochrome b-c1 complex subunit 3</fullName>
    </alternativeName>
    <alternativeName>
        <fullName>Ubiquinol-cytochrome-c reductase complex cytochrome b subunit</fullName>
    </alternativeName>
</protein>
<reference key="1">
    <citation type="submission" date="2001-06" db="EMBL/GenBank/DDBJ databases">
        <title>Intraspecific phylogeny and biogeographic history of Sorex caecutiens/shinto group (Soricidae, Insectivora): a special reference to shrews from Cheju Island and the Korean Peninsula.</title>
        <authorList>
            <person name="Ohdachi S."/>
            <person name="Han S."/>
            <person name="Abe H."/>
        </authorList>
    </citation>
    <scope>NUCLEOTIDE SEQUENCE [GENOMIC DNA]</scope>
    <source>
        <strain>Isolate 99/10/17-3</strain>
        <tissue>Liver</tissue>
    </source>
</reference>
<reference key="2">
    <citation type="journal article" date="1997" name="Zool. Sci.">
        <title>Molecular phylogeny from nucleotide sequences of the mitochondrial cytochrome b gene and evolutionary history of Eurasian soricine shrews (Mammalia, Insectivora).</title>
        <authorList>
            <person name="Ohdachi S."/>
            <person name="Masuda R."/>
            <person name="Abe H."/>
            <person name="Adachi J."/>
            <person name="Dokuchaev N.E."/>
            <person name="Haukisalmi V."/>
            <person name="Yoshida M.C."/>
        </authorList>
    </citation>
    <scope>NUCLEOTIDE SEQUENCE [GENOMIC DNA] OF 1-134</scope>
    <source>
        <strain>Isolate 96MISC-1</strain>
        <tissue>Liver</tissue>
    </source>
</reference>
<accession>O21416</accession>
<accession>Q8WF56</accession>
<organism>
    <name type="scientific">Sorex mirabilis</name>
    <name type="common">Ussuri shrew</name>
    <name type="synonym">Giant shrew</name>
    <dbReference type="NCBI Taxonomy" id="62289"/>
    <lineage>
        <taxon>Eukaryota</taxon>
        <taxon>Metazoa</taxon>
        <taxon>Chordata</taxon>
        <taxon>Craniata</taxon>
        <taxon>Vertebrata</taxon>
        <taxon>Euteleostomi</taxon>
        <taxon>Mammalia</taxon>
        <taxon>Eutheria</taxon>
        <taxon>Laurasiatheria</taxon>
        <taxon>Eulipotyphla</taxon>
        <taxon>Soricidae</taxon>
        <taxon>Soricinae</taxon>
        <taxon>Sorex</taxon>
    </lineage>
</organism>
<proteinExistence type="inferred from homology"/>
<name>CYB_SORMR</name>
<comment type="function">
    <text evidence="2">Component of the ubiquinol-cytochrome c reductase complex (complex III or cytochrome b-c1 complex) that is part of the mitochondrial respiratory chain. The b-c1 complex mediates electron transfer from ubiquinol to cytochrome c. Contributes to the generation of a proton gradient across the mitochondrial membrane that is then used for ATP synthesis.</text>
</comment>
<comment type="cofactor">
    <cofactor evidence="2">
        <name>heme b</name>
        <dbReference type="ChEBI" id="CHEBI:60344"/>
    </cofactor>
    <text evidence="2">Binds 2 heme b groups non-covalently.</text>
</comment>
<comment type="subunit">
    <text evidence="2">The cytochrome bc1 complex contains 11 subunits: 3 respiratory subunits (MT-CYB, CYC1 and UQCRFS1), 2 core proteins (UQCRC1 and UQCRC2) and 6 low-molecular weight proteins (UQCRH/QCR6, UQCRB/QCR7, UQCRQ/QCR8, UQCR10/QCR9, UQCR11/QCR10 and a cleavage product of UQCRFS1). This cytochrome bc1 complex then forms a dimer.</text>
</comment>
<comment type="subcellular location">
    <subcellularLocation>
        <location evidence="2">Mitochondrion inner membrane</location>
        <topology evidence="2">Multi-pass membrane protein</topology>
    </subcellularLocation>
</comment>
<comment type="miscellaneous">
    <text evidence="1">Heme 1 (or BL or b562) is low-potential and absorbs at about 562 nm, and heme 2 (or BH or b566) is high-potential and absorbs at about 566 nm.</text>
</comment>
<comment type="similarity">
    <text evidence="3 4">Belongs to the cytochrome b family.</text>
</comment>
<comment type="caution">
    <text evidence="2">The full-length protein contains only eight transmembrane helices, not nine as predicted by bioinformatics tools.</text>
</comment>
<feature type="chain" id="PRO_0000061572" description="Cytochrome b">
    <location>
        <begin position="1"/>
        <end position="379"/>
    </location>
</feature>
<feature type="transmembrane region" description="Helical" evidence="2">
    <location>
        <begin position="33"/>
        <end position="53"/>
    </location>
</feature>
<feature type="transmembrane region" description="Helical" evidence="2">
    <location>
        <begin position="77"/>
        <end position="98"/>
    </location>
</feature>
<feature type="transmembrane region" description="Helical" evidence="2">
    <location>
        <begin position="113"/>
        <end position="133"/>
    </location>
</feature>
<feature type="transmembrane region" description="Helical" evidence="2">
    <location>
        <begin position="178"/>
        <end position="198"/>
    </location>
</feature>
<feature type="transmembrane region" description="Helical" evidence="2">
    <location>
        <begin position="226"/>
        <end position="246"/>
    </location>
</feature>
<feature type="transmembrane region" description="Helical" evidence="2">
    <location>
        <begin position="288"/>
        <end position="308"/>
    </location>
</feature>
<feature type="transmembrane region" description="Helical" evidence="2">
    <location>
        <begin position="320"/>
        <end position="340"/>
    </location>
</feature>
<feature type="transmembrane region" description="Helical" evidence="2">
    <location>
        <begin position="347"/>
        <end position="367"/>
    </location>
</feature>
<feature type="binding site" description="axial binding residue" evidence="2">
    <location>
        <position position="83"/>
    </location>
    <ligand>
        <name>heme b</name>
        <dbReference type="ChEBI" id="CHEBI:60344"/>
        <label>b562</label>
    </ligand>
    <ligandPart>
        <name>Fe</name>
        <dbReference type="ChEBI" id="CHEBI:18248"/>
    </ligandPart>
</feature>
<feature type="binding site" description="axial binding residue" evidence="2">
    <location>
        <position position="97"/>
    </location>
    <ligand>
        <name>heme b</name>
        <dbReference type="ChEBI" id="CHEBI:60344"/>
        <label>b566</label>
    </ligand>
    <ligandPart>
        <name>Fe</name>
        <dbReference type="ChEBI" id="CHEBI:18248"/>
    </ligandPart>
</feature>
<feature type="binding site" description="axial binding residue" evidence="2">
    <location>
        <position position="182"/>
    </location>
    <ligand>
        <name>heme b</name>
        <dbReference type="ChEBI" id="CHEBI:60344"/>
        <label>b562</label>
    </ligand>
    <ligandPart>
        <name>Fe</name>
        <dbReference type="ChEBI" id="CHEBI:18248"/>
    </ligandPart>
</feature>
<feature type="binding site" description="axial binding residue" evidence="2">
    <location>
        <position position="196"/>
    </location>
    <ligand>
        <name>heme b</name>
        <dbReference type="ChEBI" id="CHEBI:60344"/>
        <label>b566</label>
    </ligand>
    <ligandPart>
        <name>Fe</name>
        <dbReference type="ChEBI" id="CHEBI:18248"/>
    </ligandPart>
</feature>
<feature type="binding site" evidence="2">
    <location>
        <position position="201"/>
    </location>
    <ligand>
        <name>a ubiquinone</name>
        <dbReference type="ChEBI" id="CHEBI:16389"/>
    </ligand>
</feature>
<dbReference type="EMBL" id="AB062737">
    <property type="protein sequence ID" value="BAB78587.1"/>
    <property type="molecule type" value="Genomic_DNA"/>
</dbReference>
<dbReference type="EMBL" id="D87025">
    <property type="protein sequence ID" value="BAA21366.1"/>
    <property type="molecule type" value="Genomic_DNA"/>
</dbReference>
<dbReference type="SMR" id="O21416"/>
<dbReference type="GO" id="GO:0005743">
    <property type="term" value="C:mitochondrial inner membrane"/>
    <property type="evidence" value="ECO:0007669"/>
    <property type="project" value="UniProtKB-SubCell"/>
</dbReference>
<dbReference type="GO" id="GO:0045275">
    <property type="term" value="C:respiratory chain complex III"/>
    <property type="evidence" value="ECO:0007669"/>
    <property type="project" value="InterPro"/>
</dbReference>
<dbReference type="GO" id="GO:0046872">
    <property type="term" value="F:metal ion binding"/>
    <property type="evidence" value="ECO:0007669"/>
    <property type="project" value="UniProtKB-KW"/>
</dbReference>
<dbReference type="GO" id="GO:0008121">
    <property type="term" value="F:ubiquinol-cytochrome-c reductase activity"/>
    <property type="evidence" value="ECO:0007669"/>
    <property type="project" value="InterPro"/>
</dbReference>
<dbReference type="GO" id="GO:0006122">
    <property type="term" value="P:mitochondrial electron transport, ubiquinol to cytochrome c"/>
    <property type="evidence" value="ECO:0007669"/>
    <property type="project" value="TreeGrafter"/>
</dbReference>
<dbReference type="CDD" id="cd00290">
    <property type="entry name" value="cytochrome_b_C"/>
    <property type="match status" value="1"/>
</dbReference>
<dbReference type="CDD" id="cd00284">
    <property type="entry name" value="Cytochrome_b_N"/>
    <property type="match status" value="1"/>
</dbReference>
<dbReference type="FunFam" id="1.20.810.10:FF:000002">
    <property type="entry name" value="Cytochrome b"/>
    <property type="match status" value="1"/>
</dbReference>
<dbReference type="Gene3D" id="1.20.810.10">
    <property type="entry name" value="Cytochrome Bc1 Complex, Chain C"/>
    <property type="match status" value="1"/>
</dbReference>
<dbReference type="InterPro" id="IPR005798">
    <property type="entry name" value="Cyt_b/b6_C"/>
</dbReference>
<dbReference type="InterPro" id="IPR036150">
    <property type="entry name" value="Cyt_b/b6_C_sf"/>
</dbReference>
<dbReference type="InterPro" id="IPR005797">
    <property type="entry name" value="Cyt_b/b6_N"/>
</dbReference>
<dbReference type="InterPro" id="IPR027387">
    <property type="entry name" value="Cytb/b6-like_sf"/>
</dbReference>
<dbReference type="InterPro" id="IPR030689">
    <property type="entry name" value="Cytochrome_b"/>
</dbReference>
<dbReference type="InterPro" id="IPR048260">
    <property type="entry name" value="Cytochrome_b_C_euk/bac"/>
</dbReference>
<dbReference type="InterPro" id="IPR048259">
    <property type="entry name" value="Cytochrome_b_N_euk/bac"/>
</dbReference>
<dbReference type="InterPro" id="IPR016174">
    <property type="entry name" value="Di-haem_cyt_TM"/>
</dbReference>
<dbReference type="PANTHER" id="PTHR19271">
    <property type="entry name" value="CYTOCHROME B"/>
    <property type="match status" value="1"/>
</dbReference>
<dbReference type="PANTHER" id="PTHR19271:SF16">
    <property type="entry name" value="CYTOCHROME B"/>
    <property type="match status" value="1"/>
</dbReference>
<dbReference type="Pfam" id="PF00032">
    <property type="entry name" value="Cytochrom_B_C"/>
    <property type="match status" value="1"/>
</dbReference>
<dbReference type="Pfam" id="PF00033">
    <property type="entry name" value="Cytochrome_B"/>
    <property type="match status" value="1"/>
</dbReference>
<dbReference type="PIRSF" id="PIRSF038885">
    <property type="entry name" value="COB"/>
    <property type="match status" value="1"/>
</dbReference>
<dbReference type="SUPFAM" id="SSF81648">
    <property type="entry name" value="a domain/subunit of cytochrome bc1 complex (Ubiquinol-cytochrome c reductase)"/>
    <property type="match status" value="1"/>
</dbReference>
<dbReference type="SUPFAM" id="SSF81342">
    <property type="entry name" value="Transmembrane di-heme cytochromes"/>
    <property type="match status" value="1"/>
</dbReference>
<dbReference type="PROSITE" id="PS51003">
    <property type="entry name" value="CYTB_CTER"/>
    <property type="match status" value="1"/>
</dbReference>
<dbReference type="PROSITE" id="PS51002">
    <property type="entry name" value="CYTB_NTER"/>
    <property type="match status" value="1"/>
</dbReference>
<keyword id="KW-0249">Electron transport</keyword>
<keyword id="KW-0349">Heme</keyword>
<keyword id="KW-0408">Iron</keyword>
<keyword id="KW-0472">Membrane</keyword>
<keyword id="KW-0479">Metal-binding</keyword>
<keyword id="KW-0496">Mitochondrion</keyword>
<keyword id="KW-0999">Mitochondrion inner membrane</keyword>
<keyword id="KW-0679">Respiratory chain</keyword>
<keyword id="KW-0812">Transmembrane</keyword>
<keyword id="KW-1133">Transmembrane helix</keyword>
<keyword id="KW-0813">Transport</keyword>
<keyword id="KW-0830">Ubiquinone</keyword>
<geneLocation type="mitochondrion"/>